<evidence type="ECO:0000250" key="1"/>
<evidence type="ECO:0000256" key="2">
    <source>
        <dbReference type="SAM" id="MobiDB-lite"/>
    </source>
</evidence>
<evidence type="ECO:0000305" key="3"/>
<dbReference type="EMBL" id="CH476597">
    <property type="protein sequence ID" value="EAU36305.1"/>
    <property type="molecule type" value="Genomic_DNA"/>
</dbReference>
<dbReference type="RefSeq" id="XP_001212209.1">
    <property type="nucleotide sequence ID" value="XM_001212209.1"/>
</dbReference>
<dbReference type="SMR" id="Q0CTF3"/>
<dbReference type="STRING" id="341663.Q0CTF3"/>
<dbReference type="EnsemblFungi" id="EAU36305">
    <property type="protein sequence ID" value="EAU36305"/>
    <property type="gene ID" value="ATEG_03031"/>
</dbReference>
<dbReference type="GeneID" id="4317575"/>
<dbReference type="VEuPathDB" id="FungiDB:ATEG_03031"/>
<dbReference type="eggNOG" id="KOG3046">
    <property type="taxonomic scope" value="Eukaryota"/>
</dbReference>
<dbReference type="HOGENOM" id="CLU_096169_0_0_1"/>
<dbReference type="OMA" id="QYQRAKM"/>
<dbReference type="OrthoDB" id="337270at2759"/>
<dbReference type="Proteomes" id="UP000007963">
    <property type="component" value="Unassembled WGS sequence"/>
</dbReference>
<dbReference type="GO" id="GO:0016592">
    <property type="term" value="C:mediator complex"/>
    <property type="evidence" value="ECO:0007669"/>
    <property type="project" value="InterPro"/>
</dbReference>
<dbReference type="GO" id="GO:0003712">
    <property type="term" value="F:transcription coregulator activity"/>
    <property type="evidence" value="ECO:0007669"/>
    <property type="project" value="InterPro"/>
</dbReference>
<dbReference type="GO" id="GO:0006357">
    <property type="term" value="P:regulation of transcription by RNA polymerase II"/>
    <property type="evidence" value="ECO:0007669"/>
    <property type="project" value="InterPro"/>
</dbReference>
<dbReference type="InterPro" id="IPR019145">
    <property type="entry name" value="Mediator_Med10"/>
</dbReference>
<dbReference type="Pfam" id="PF09748">
    <property type="entry name" value="Med10"/>
    <property type="match status" value="1"/>
</dbReference>
<sequence>MAPVTLSTVDTDLKDVIQHLFEIQSAVHGYLGPETQQELVRKIKNLTLALSTLSSHTQSHAPDADTAQANPSDPPISTIELPPEIIDYVDAARNPDIYTREFVELVQRGNQDLKGKKEAFAGFRDVLAREMRSAMPECRGEVDRVVRATGGGEES</sequence>
<name>MED10_ASPTN</name>
<comment type="function">
    <text evidence="1">Component of the Mediator complex, a coactivator involved in the regulated transcription of nearly all RNA polymerase II-dependent genes. Mediator functions as a bridge to convey information from gene-specific regulatory proteins to the basal RNA polymerase II transcription machinery. Mediator is recruited to promoters by direct interactions with regulatory proteins and serves as a scaffold for the assembly of a functional preinitiation complex with RNA polymerase II and the general transcription factors (By similarity).</text>
</comment>
<comment type="subunit">
    <text evidence="1">Component of the Mediator complex.</text>
</comment>
<comment type="subcellular location">
    <subcellularLocation>
        <location evidence="1">Nucleus</location>
    </subcellularLocation>
</comment>
<comment type="similarity">
    <text evidence="3">Belongs to the Mediator complex subunit 10 family.</text>
</comment>
<proteinExistence type="inferred from homology"/>
<protein>
    <recommendedName>
        <fullName>Mediator of RNA polymerase II transcription subunit 10</fullName>
    </recommendedName>
    <alternativeName>
        <fullName>Mediator complex subunit 10</fullName>
    </alternativeName>
</protein>
<reference key="1">
    <citation type="submission" date="2005-09" db="EMBL/GenBank/DDBJ databases">
        <title>Annotation of the Aspergillus terreus NIH2624 genome.</title>
        <authorList>
            <person name="Birren B.W."/>
            <person name="Lander E.S."/>
            <person name="Galagan J.E."/>
            <person name="Nusbaum C."/>
            <person name="Devon K."/>
            <person name="Henn M."/>
            <person name="Ma L.-J."/>
            <person name="Jaffe D.B."/>
            <person name="Butler J."/>
            <person name="Alvarez P."/>
            <person name="Gnerre S."/>
            <person name="Grabherr M."/>
            <person name="Kleber M."/>
            <person name="Mauceli E.W."/>
            <person name="Brockman W."/>
            <person name="Rounsley S."/>
            <person name="Young S.K."/>
            <person name="LaButti K."/>
            <person name="Pushparaj V."/>
            <person name="DeCaprio D."/>
            <person name="Crawford M."/>
            <person name="Koehrsen M."/>
            <person name="Engels R."/>
            <person name="Montgomery P."/>
            <person name="Pearson M."/>
            <person name="Howarth C."/>
            <person name="Larson L."/>
            <person name="Luoma S."/>
            <person name="White J."/>
            <person name="Alvarado L."/>
            <person name="Kodira C.D."/>
            <person name="Zeng Q."/>
            <person name="Oleary S."/>
            <person name="Yandava C."/>
            <person name="Denning D.W."/>
            <person name="Nierman W.C."/>
            <person name="Milne T."/>
            <person name="Madden K."/>
        </authorList>
    </citation>
    <scope>NUCLEOTIDE SEQUENCE [LARGE SCALE GENOMIC DNA]</scope>
    <source>
        <strain>NIH 2624 / FGSC A1156</strain>
    </source>
</reference>
<accession>Q0CTF3</accession>
<feature type="chain" id="PRO_0000303165" description="Mediator of RNA polymerase II transcription subunit 10">
    <location>
        <begin position="1"/>
        <end position="155"/>
    </location>
</feature>
<feature type="region of interest" description="Disordered" evidence="2">
    <location>
        <begin position="54"/>
        <end position="80"/>
    </location>
</feature>
<keyword id="KW-0010">Activator</keyword>
<keyword id="KW-0539">Nucleus</keyword>
<keyword id="KW-1185">Reference proteome</keyword>
<keyword id="KW-0804">Transcription</keyword>
<keyword id="KW-0805">Transcription regulation</keyword>
<organism>
    <name type="scientific">Aspergillus terreus (strain NIH 2624 / FGSC A1156)</name>
    <dbReference type="NCBI Taxonomy" id="341663"/>
    <lineage>
        <taxon>Eukaryota</taxon>
        <taxon>Fungi</taxon>
        <taxon>Dikarya</taxon>
        <taxon>Ascomycota</taxon>
        <taxon>Pezizomycotina</taxon>
        <taxon>Eurotiomycetes</taxon>
        <taxon>Eurotiomycetidae</taxon>
        <taxon>Eurotiales</taxon>
        <taxon>Aspergillaceae</taxon>
        <taxon>Aspergillus</taxon>
        <taxon>Aspergillus subgen. Circumdati</taxon>
    </lineage>
</organism>
<gene>
    <name type="primary">nut2</name>
    <name type="synonym">med10</name>
    <name type="ORF">ATEG_03031</name>
</gene>